<proteinExistence type="inferred from homology"/>
<dbReference type="EMBL" id="U28377">
    <property type="protein sequence ID" value="AAA69135.1"/>
    <property type="molecule type" value="Genomic_DNA"/>
</dbReference>
<dbReference type="EMBL" id="U00096">
    <property type="protein sequence ID" value="AAC76004.1"/>
    <property type="molecule type" value="Genomic_DNA"/>
</dbReference>
<dbReference type="EMBL" id="AP009048">
    <property type="protein sequence ID" value="BAE77030.1"/>
    <property type="molecule type" value="Genomic_DNA"/>
</dbReference>
<dbReference type="PIR" id="F65082">
    <property type="entry name" value="F65082"/>
</dbReference>
<dbReference type="RefSeq" id="NP_417442.1">
    <property type="nucleotide sequence ID" value="NC_000913.3"/>
</dbReference>
<dbReference type="RefSeq" id="WP_000942785.1">
    <property type="nucleotide sequence ID" value="NZ_LN832404.1"/>
</dbReference>
<dbReference type="SMR" id="Q46832"/>
<dbReference type="BioGRID" id="4262353">
    <property type="interactions" value="1187"/>
</dbReference>
<dbReference type="FunCoup" id="Q46832">
    <property type="interactions" value="80"/>
</dbReference>
<dbReference type="STRING" id="511145.b2968"/>
<dbReference type="PaxDb" id="511145-b2968"/>
<dbReference type="EnsemblBacteria" id="AAC76004">
    <property type="protein sequence ID" value="AAC76004"/>
    <property type="gene ID" value="b2968"/>
</dbReference>
<dbReference type="GeneID" id="947025"/>
<dbReference type="KEGG" id="ecj:JW2935"/>
<dbReference type="KEGG" id="eco:b2968"/>
<dbReference type="KEGG" id="ecoc:C3026_16240"/>
<dbReference type="PATRIC" id="fig|1411691.4.peg.3763"/>
<dbReference type="EchoBASE" id="EB2812"/>
<dbReference type="eggNOG" id="COG3149">
    <property type="taxonomic scope" value="Bacteria"/>
</dbReference>
<dbReference type="HOGENOM" id="CLU_118900_3_0_6"/>
<dbReference type="InParanoid" id="Q46832"/>
<dbReference type="OMA" id="PQGNKIQ"/>
<dbReference type="OrthoDB" id="6624834at2"/>
<dbReference type="BioCyc" id="EcoCyc:G7535-MONOMER"/>
<dbReference type="PRO" id="PR:Q46832"/>
<dbReference type="Proteomes" id="UP000000625">
    <property type="component" value="Chromosome"/>
</dbReference>
<dbReference type="GO" id="GO:0005886">
    <property type="term" value="C:plasma membrane"/>
    <property type="evidence" value="ECO:0007669"/>
    <property type="project" value="UniProtKB-SubCell"/>
</dbReference>
<dbReference type="GO" id="GO:0015627">
    <property type="term" value="C:type II protein secretion system complex"/>
    <property type="evidence" value="ECO:0007669"/>
    <property type="project" value="InterPro"/>
</dbReference>
<dbReference type="GO" id="GO:0015628">
    <property type="term" value="P:protein secretion by the type II secretion system"/>
    <property type="evidence" value="ECO:0007669"/>
    <property type="project" value="InterPro"/>
</dbReference>
<dbReference type="Gene3D" id="3.30.1360.100">
    <property type="entry name" value="General secretion pathway protein M, EpsM"/>
    <property type="match status" value="1"/>
</dbReference>
<dbReference type="InterPro" id="IPR007690">
    <property type="entry name" value="T2SS_GspM"/>
</dbReference>
<dbReference type="InterPro" id="IPR023229">
    <property type="entry name" value="T2SS_M_periplasmic_sf"/>
</dbReference>
<dbReference type="NCBIfam" id="NF007274">
    <property type="entry name" value="PRK09731.1"/>
    <property type="match status" value="1"/>
</dbReference>
<dbReference type="Pfam" id="PF04612">
    <property type="entry name" value="T2SSM"/>
    <property type="match status" value="1"/>
</dbReference>
<dbReference type="PIRSF" id="PIRSF006291">
    <property type="entry name" value="GspM"/>
    <property type="match status" value="1"/>
</dbReference>
<dbReference type="SUPFAM" id="SSF103054">
    <property type="entry name" value="General secretion pathway protein M, EpsM"/>
    <property type="match status" value="1"/>
</dbReference>
<name>YGHD_ECOLI</name>
<accession>Q46832</accession>
<accession>Q2M9M6</accession>
<organism>
    <name type="scientific">Escherichia coli (strain K12)</name>
    <dbReference type="NCBI Taxonomy" id="83333"/>
    <lineage>
        <taxon>Bacteria</taxon>
        <taxon>Pseudomonadati</taxon>
        <taxon>Pseudomonadota</taxon>
        <taxon>Gammaproteobacteria</taxon>
        <taxon>Enterobacterales</taxon>
        <taxon>Enterobacteriaceae</taxon>
        <taxon>Escherichia</taxon>
    </lineage>
</organism>
<protein>
    <recommendedName>
        <fullName>Putative type II secretion system M-type protein YghD</fullName>
        <shortName>Putative T2SS M-type protein YghD</shortName>
    </recommendedName>
    <alternativeName>
        <fullName>Putative extracytoplasmic function protein C</fullName>
    </alternativeName>
    <alternativeName>
        <fullName>Putative general secretion pathway M-type protein YghD</fullName>
    </alternativeName>
</protein>
<keyword id="KW-0997">Cell inner membrane</keyword>
<keyword id="KW-1003">Cell membrane</keyword>
<keyword id="KW-0472">Membrane</keyword>
<keyword id="KW-0653">Protein transport</keyword>
<keyword id="KW-1185">Reference proteome</keyword>
<keyword id="KW-0812">Transmembrane</keyword>
<keyword id="KW-1133">Transmembrane helix</keyword>
<keyword id="KW-0813">Transport</keyword>
<reference key="1">
    <citation type="journal article" date="1997" name="Science">
        <title>The complete genome sequence of Escherichia coli K-12.</title>
        <authorList>
            <person name="Blattner F.R."/>
            <person name="Plunkett G. III"/>
            <person name="Bloch C.A."/>
            <person name="Perna N.T."/>
            <person name="Burland V."/>
            <person name="Riley M."/>
            <person name="Collado-Vides J."/>
            <person name="Glasner J.D."/>
            <person name="Rode C.K."/>
            <person name="Mayhew G.F."/>
            <person name="Gregor J."/>
            <person name="Davis N.W."/>
            <person name="Kirkpatrick H.A."/>
            <person name="Goeden M.A."/>
            <person name="Rose D.J."/>
            <person name="Mau B."/>
            <person name="Shao Y."/>
        </authorList>
    </citation>
    <scope>NUCLEOTIDE SEQUENCE [LARGE SCALE GENOMIC DNA]</scope>
    <source>
        <strain>K12 / MG1655 / ATCC 47076</strain>
    </source>
</reference>
<reference key="2">
    <citation type="journal article" date="2006" name="Mol. Syst. Biol.">
        <title>Highly accurate genome sequences of Escherichia coli K-12 strains MG1655 and W3110.</title>
        <authorList>
            <person name="Hayashi K."/>
            <person name="Morooka N."/>
            <person name="Yamamoto Y."/>
            <person name="Fujita K."/>
            <person name="Isono K."/>
            <person name="Choi S."/>
            <person name="Ohtsubo E."/>
            <person name="Baba T."/>
            <person name="Wanner B.L."/>
            <person name="Mori H."/>
            <person name="Horiuchi T."/>
        </authorList>
    </citation>
    <scope>NUCLEOTIDE SEQUENCE [LARGE SCALE GENOMIC DNA]</scope>
    <source>
        <strain>K12 / W3110 / ATCC 27325 / DSM 5911</strain>
    </source>
</reference>
<evidence type="ECO:0000255" key="1"/>
<evidence type="ECO:0000305" key="2"/>
<comment type="function">
    <text evidence="2">Involved in a type II secretion system (T2SS, formerly general secretion pathway, GSP) for the export of folded proteins across the outer membrane.</text>
</comment>
<comment type="subcellular location">
    <subcellularLocation>
        <location evidence="2">Cell inner membrane</location>
        <topology evidence="2">Single-pass membrane protein</topology>
    </subcellularLocation>
</comment>
<comment type="miscellaneous">
    <text evidence="2">In many other E.coli strains this gene is part of a type II secretion system, but in MG1655 the locus is missing a number of genes.</text>
</comment>
<comment type="similarity">
    <text evidence="2">Belongs to the GSP M family.</text>
</comment>
<gene>
    <name type="primary">yghD</name>
    <name type="synonym">ecfC</name>
    <name type="ordered locus">b2968</name>
    <name type="ordered locus">JW2935</name>
</gene>
<feature type="chain" id="PRO_0000207329" description="Putative type II secretion system M-type protein YghD">
    <location>
        <begin position="1"/>
        <end position="178"/>
    </location>
</feature>
<feature type="topological domain" description="Cytoplasmic" evidence="1">
    <location>
        <begin position="1"/>
        <end position="39"/>
    </location>
</feature>
<feature type="transmembrane region" description="Helical" evidence="1">
    <location>
        <begin position="40"/>
        <end position="60"/>
    </location>
</feature>
<feature type="topological domain" description="Periplasmic" evidence="1">
    <location>
        <begin position="61"/>
        <end position="178"/>
    </location>
</feature>
<sequence length="178" mass="20395">MLRDKFIHYFQQWRERQLSRGEHWLAQHLAGRSPREKGMLLAAVVFLFSVGYYVLIWQPLSERIEQQETILQQLVAMNTRLKNAAPDIIAARKSATTTPAQVSRVISDSASAHSVVIRRIADRGENIQVWIEPVVFNDLLKWLNALDEKYALRVTQIDVSAAEKPGMVNVQRLEFGRG</sequence>